<proteinExistence type="inferred from homology"/>
<reference key="1">
    <citation type="journal article" date="1995" name="Science">
        <title>Whole-genome random sequencing and assembly of Haemophilus influenzae Rd.</title>
        <authorList>
            <person name="Fleischmann R.D."/>
            <person name="Adams M.D."/>
            <person name="White O."/>
            <person name="Clayton R.A."/>
            <person name="Kirkness E.F."/>
            <person name="Kerlavage A.R."/>
            <person name="Bult C.J."/>
            <person name="Tomb J.-F."/>
            <person name="Dougherty B.A."/>
            <person name="Merrick J.M."/>
            <person name="McKenney K."/>
            <person name="Sutton G.G."/>
            <person name="FitzHugh W."/>
            <person name="Fields C.A."/>
            <person name="Gocayne J.D."/>
            <person name="Scott J.D."/>
            <person name="Shirley R."/>
            <person name="Liu L.-I."/>
            <person name="Glodek A."/>
            <person name="Kelley J.M."/>
            <person name="Weidman J.F."/>
            <person name="Phillips C.A."/>
            <person name="Spriggs T."/>
            <person name="Hedblom E."/>
            <person name="Cotton M.D."/>
            <person name="Utterback T.R."/>
            <person name="Hanna M.C."/>
            <person name="Nguyen D.T."/>
            <person name="Saudek D.M."/>
            <person name="Brandon R.C."/>
            <person name="Fine L.D."/>
            <person name="Fritchman J.L."/>
            <person name="Fuhrmann J.L."/>
            <person name="Geoghagen N.S.M."/>
            <person name="Gnehm C.L."/>
            <person name="McDonald L.A."/>
            <person name="Small K.V."/>
            <person name="Fraser C.M."/>
            <person name="Smith H.O."/>
            <person name="Venter J.C."/>
        </authorList>
    </citation>
    <scope>NUCLEOTIDE SEQUENCE [LARGE SCALE GENOMIC DNA]</scope>
    <source>
        <strain>ATCC 51907 / DSM 11121 / KW20 / Rd</strain>
    </source>
</reference>
<name>HSRA_HAEIN</name>
<accession>P44903</accession>
<sequence length="463" mass="50003">MTTESNAYRGLAWVAAMALFMQSLDATILNTALPAISSDLHKPAFEMQMAIIAYSLAVALFIPLTAWAAAKFGTLTVFRSAVFTFILGSVACAAASNLESLILARVIQGIGGAFMMPVARLAIIQAVPKQQLVNAWNLMATAGLIGPILGPILGGWLVIHASWHWIFLINIPIGALGILASGSVMNNIKGKAEKLDWTGFLLFALGLVGITLGLDLLGESQHNSSVTYSILVVGILLLVTYCGYAKNNENAILPLSLFRTRTFRLGIIANIFIRLSASGVPFLLPLMFQLSFGYSAEMSGWLLAPIALISVMLKILIGRILNRWGYKTTLISSALLMAGSVISMAWLDKQSSLTWIICNLMWYGACMSIIFTSINTLAVGDLSKQQSGTGSTVLSIVQQVGIGFGIAVSSIILNLYRHFFSASDCLPQAFSYTFLTSSLFVIALVWSLMKLHKHDGDHLRKMP</sequence>
<protein>
    <recommendedName>
        <fullName>Probable transport protein HsrA</fullName>
    </recommendedName>
</protein>
<feature type="chain" id="PRO_0000173410" description="Probable transport protein HsrA">
    <location>
        <begin position="1"/>
        <end position="463"/>
    </location>
</feature>
<feature type="transmembrane region" description="Helical" evidence="1">
    <location>
        <begin position="10"/>
        <end position="30"/>
    </location>
</feature>
<feature type="transmembrane region" description="Helical" evidence="1">
    <location>
        <begin position="49"/>
        <end position="69"/>
    </location>
</feature>
<feature type="transmembrane region" description="Helical" evidence="1">
    <location>
        <begin position="82"/>
        <end position="102"/>
    </location>
</feature>
<feature type="transmembrane region" description="Helical" evidence="1">
    <location>
        <begin position="107"/>
        <end position="127"/>
    </location>
</feature>
<feature type="transmembrane region" description="Helical" evidence="1">
    <location>
        <begin position="139"/>
        <end position="159"/>
    </location>
</feature>
<feature type="transmembrane region" description="Helical" evidence="1">
    <location>
        <begin position="165"/>
        <end position="185"/>
    </location>
</feature>
<feature type="transmembrane region" description="Helical" evidence="1">
    <location>
        <begin position="197"/>
        <end position="217"/>
    </location>
</feature>
<feature type="transmembrane region" description="Helical" evidence="1">
    <location>
        <begin position="225"/>
        <end position="245"/>
    </location>
</feature>
<feature type="transmembrane region" description="Helical" evidence="1">
    <location>
        <begin position="267"/>
        <end position="287"/>
    </location>
</feature>
<feature type="transmembrane region" description="Helical" evidence="1">
    <location>
        <begin position="298"/>
        <end position="318"/>
    </location>
</feature>
<feature type="transmembrane region" description="Helical" evidence="1">
    <location>
        <begin position="328"/>
        <end position="348"/>
    </location>
</feature>
<feature type="transmembrane region" description="Helical" evidence="1">
    <location>
        <begin position="354"/>
        <end position="374"/>
    </location>
</feature>
<feature type="transmembrane region" description="Helical" evidence="1">
    <location>
        <begin position="393"/>
        <end position="413"/>
    </location>
</feature>
<feature type="transmembrane region" description="Helical" evidence="1">
    <location>
        <begin position="429"/>
        <end position="449"/>
    </location>
</feature>
<organism>
    <name type="scientific">Haemophilus influenzae (strain ATCC 51907 / DSM 11121 / KW20 / Rd)</name>
    <dbReference type="NCBI Taxonomy" id="71421"/>
    <lineage>
        <taxon>Bacteria</taxon>
        <taxon>Pseudomonadati</taxon>
        <taxon>Pseudomonadota</taxon>
        <taxon>Gammaproteobacteria</taxon>
        <taxon>Pasteurellales</taxon>
        <taxon>Pasteurellaceae</taxon>
        <taxon>Haemophilus</taxon>
    </lineage>
</organism>
<keyword id="KW-0997">Cell inner membrane</keyword>
<keyword id="KW-1003">Cell membrane</keyword>
<keyword id="KW-0472">Membrane</keyword>
<keyword id="KW-1185">Reference proteome</keyword>
<keyword id="KW-0812">Transmembrane</keyword>
<keyword id="KW-1133">Transmembrane helix</keyword>
<keyword id="KW-0813">Transport</keyword>
<comment type="subcellular location">
    <subcellularLocation>
        <location evidence="2">Cell inner membrane</location>
        <topology evidence="2">Multi-pass membrane protein</topology>
    </subcellularLocation>
</comment>
<comment type="similarity">
    <text evidence="2">Belongs to the major facilitator superfamily. EmrB family.</text>
</comment>
<dbReference type="EMBL" id="L42023">
    <property type="protein sequence ID" value="AAC22509.1"/>
    <property type="molecule type" value="Genomic_DNA"/>
</dbReference>
<dbReference type="PIR" id="B64160">
    <property type="entry name" value="B64160"/>
</dbReference>
<dbReference type="RefSeq" id="NP_439012.1">
    <property type="nucleotide sequence ID" value="NC_000907.1"/>
</dbReference>
<dbReference type="SMR" id="P44903"/>
<dbReference type="STRING" id="71421.HI_0852"/>
<dbReference type="EnsemblBacteria" id="AAC22509">
    <property type="protein sequence ID" value="AAC22509"/>
    <property type="gene ID" value="HI_0852"/>
</dbReference>
<dbReference type="KEGG" id="hin:HI_0852"/>
<dbReference type="PATRIC" id="fig|71421.8.peg.893"/>
<dbReference type="eggNOG" id="COG2814">
    <property type="taxonomic scope" value="Bacteria"/>
</dbReference>
<dbReference type="HOGENOM" id="CLU_000960_28_0_6"/>
<dbReference type="OrthoDB" id="9812221at2"/>
<dbReference type="PhylomeDB" id="P44903"/>
<dbReference type="BioCyc" id="HINF71421:G1GJ1-892-MONOMER"/>
<dbReference type="Proteomes" id="UP000000579">
    <property type="component" value="Chromosome"/>
</dbReference>
<dbReference type="GO" id="GO:0005886">
    <property type="term" value="C:plasma membrane"/>
    <property type="evidence" value="ECO:0000318"/>
    <property type="project" value="GO_Central"/>
</dbReference>
<dbReference type="GO" id="GO:0022857">
    <property type="term" value="F:transmembrane transporter activity"/>
    <property type="evidence" value="ECO:0000318"/>
    <property type="project" value="GO_Central"/>
</dbReference>
<dbReference type="GO" id="GO:0055085">
    <property type="term" value="P:transmembrane transport"/>
    <property type="evidence" value="ECO:0000318"/>
    <property type="project" value="GO_Central"/>
</dbReference>
<dbReference type="CDD" id="cd17503">
    <property type="entry name" value="MFS_LmrB_MDR_like"/>
    <property type="match status" value="1"/>
</dbReference>
<dbReference type="Gene3D" id="1.20.1250.20">
    <property type="entry name" value="MFS general substrate transporter like domains"/>
    <property type="match status" value="1"/>
</dbReference>
<dbReference type="Gene3D" id="1.20.1720.10">
    <property type="entry name" value="Multidrug resistance protein D"/>
    <property type="match status" value="1"/>
</dbReference>
<dbReference type="InterPro" id="IPR004638">
    <property type="entry name" value="EmrB-like"/>
</dbReference>
<dbReference type="InterPro" id="IPR011701">
    <property type="entry name" value="MFS"/>
</dbReference>
<dbReference type="InterPro" id="IPR020846">
    <property type="entry name" value="MFS_dom"/>
</dbReference>
<dbReference type="InterPro" id="IPR036259">
    <property type="entry name" value="MFS_trans_sf"/>
</dbReference>
<dbReference type="NCBIfam" id="TIGR00711">
    <property type="entry name" value="efflux_EmrB"/>
    <property type="match status" value="1"/>
</dbReference>
<dbReference type="PANTHER" id="PTHR42718:SF46">
    <property type="entry name" value="BLR6921 PROTEIN"/>
    <property type="match status" value="1"/>
</dbReference>
<dbReference type="PANTHER" id="PTHR42718">
    <property type="entry name" value="MAJOR FACILITATOR SUPERFAMILY MULTIDRUG TRANSPORTER MFSC"/>
    <property type="match status" value="1"/>
</dbReference>
<dbReference type="Pfam" id="PF07690">
    <property type="entry name" value="MFS_1"/>
    <property type="match status" value="1"/>
</dbReference>
<dbReference type="PRINTS" id="PR01036">
    <property type="entry name" value="TCRTETB"/>
</dbReference>
<dbReference type="SUPFAM" id="SSF103473">
    <property type="entry name" value="MFS general substrate transporter"/>
    <property type="match status" value="1"/>
</dbReference>
<dbReference type="PROSITE" id="PS50850">
    <property type="entry name" value="MFS"/>
    <property type="match status" value="1"/>
</dbReference>
<gene>
    <name type="primary">hsrA</name>
    <name type="ordered locus">HI_0852</name>
</gene>
<evidence type="ECO:0000255" key="1"/>
<evidence type="ECO:0000305" key="2"/>